<feature type="peptide" id="PRO_0000361083" description="[Thr6]-bradykinin RA-11" evidence="2">
    <location>
        <begin position="1"/>
        <end position="11"/>
    </location>
</feature>
<feature type="peptide" id="PRO_0000361084" description="[Thr6]-bradykinin" evidence="2 3">
    <location>
        <begin position="1"/>
        <end position="9"/>
    </location>
</feature>
<protein>
    <recommendedName>
        <fullName evidence="4">[Thr6]-bradykinin RA-11</fullName>
    </recommendedName>
    <component>
        <recommendedName>
            <fullName evidence="4">[Thr6]-bradykinin</fullName>
        </recommendedName>
    </component>
</protein>
<reference evidence="6" key="1">
    <citation type="journal article" date="2008" name="Rapid Commun. Mass Spectrom.">
        <title>De novo sequencing of peptides secreted by the skin glands of the caucasian green frog Rana ridibunda.</title>
        <authorList>
            <person name="Samgina T.Y."/>
            <person name="Artemenko K.A."/>
            <person name="Gorshkov V.A."/>
            <person name="Ogourtsov S.V."/>
            <person name="Zubarev R.A."/>
            <person name="Lebedev A.T."/>
        </authorList>
    </citation>
    <scope>PROTEIN SEQUENCE</scope>
    <scope>SUBCELLULAR LOCATION</scope>
    <scope>MASS SPECTROMETRY</scope>
    <source>
        <tissue evidence="4">Skin secretion</tissue>
    </source>
</reference>
<reference key="2">
    <citation type="journal article" date="2017" name="Anal. Bioanal. Chem.">
        <title>Differentiation of frogs from two populations belonging to the Pelophylax esculentus complex by LC-MS/MS comparison of their skin peptidomes.</title>
        <authorList>
            <person name="Samgina T.Y."/>
            <person name="Artemenko K.A."/>
            <person name="Bergquist J."/>
            <person name="Trebse P."/>
            <person name="Torkar G."/>
            <person name="Tolpina M.D."/>
            <person name="Lebedev A.T."/>
        </authorList>
    </citation>
    <scope>PROTEIN SEQUENCE OF 1-9</scope>
    <scope>SUBCELLULAR LOCATION</scope>
    <scope>MASS SPECTROMETRY</scope>
    <scope>IDENTIFICATION BY MASS SPECTROMETRY</scope>
    <source>
        <tissue evidence="5">Skin secretion</tissue>
    </source>
</reference>
<name>BRK2_PELRI</name>
<evidence type="ECO:0000250" key="1"/>
<evidence type="ECO:0000269" key="2">
    <source>
    </source>
</evidence>
<evidence type="ECO:0000269" key="3">
    <source>
    </source>
</evidence>
<evidence type="ECO:0000303" key="4">
    <source>
    </source>
</evidence>
<evidence type="ECO:0000303" key="5">
    <source>
    </source>
</evidence>
<evidence type="ECO:0000305" key="6"/>
<evidence type="ECO:0000305" key="7">
    <source>
    </source>
</evidence>
<comment type="function">
    <molecule>[Thr6]-bradykinin</molecule>
    <text evidence="1">Inhibits ACE with a Ki of 1.6 uM, and targets B2 bradykinin receptor (BDKRB2). Provokes contraction of smooth muscle preparation (ileum). In vivo, induces an early hyperalgesic effects in living rats after intraplantar injection (By similarity).</text>
</comment>
<comment type="subcellular location">
    <subcellularLocation>
        <location evidence="2 3">Secreted</location>
    </subcellularLocation>
</comment>
<comment type="tissue specificity">
    <text evidence="7">Expressed by the skin glands.</text>
</comment>
<comment type="mass spectrometry">
    <molecule>[Thr6]-bradykinin RA-11</molecule>
    <text>[Thr6]-Bradykinin RA-11.</text>
</comment>
<comment type="mass spectrometry">
    <molecule>[Thr6]-bradykinin</molecule>
    <text>[Thr6]-Bradykinin.</text>
</comment>
<comment type="mass spectrometry">
    <molecule>[Thr6]-bradykinin</molecule>
    <text>[Thr6]-Bradykinin.</text>
</comment>
<comment type="similarity">
    <text evidence="6">Belongs to the bradykinin-related peptide family.</text>
</comment>
<dbReference type="GO" id="GO:0005576">
    <property type="term" value="C:extracellular region"/>
    <property type="evidence" value="ECO:0007669"/>
    <property type="project" value="UniProtKB-SubCell"/>
</dbReference>
<dbReference type="GO" id="GO:0090729">
    <property type="term" value="F:toxin activity"/>
    <property type="evidence" value="ECO:0007669"/>
    <property type="project" value="UniProtKB-KW"/>
</dbReference>
<dbReference type="GO" id="GO:0006952">
    <property type="term" value="P:defense response"/>
    <property type="evidence" value="ECO:0007669"/>
    <property type="project" value="UniProtKB-KW"/>
</dbReference>
<sequence>RPPGFTPFRIA</sequence>
<accession>P86157</accession>
<keyword id="KW-0878">Amphibian defense peptide</keyword>
<keyword id="KW-1222">Bradykinin receptor impairing toxin</keyword>
<keyword id="KW-0903">Direct protein sequencing</keyword>
<keyword id="KW-1213">G-protein coupled receptor impairing toxin</keyword>
<keyword id="KW-0964">Secreted</keyword>
<keyword id="KW-0800">Toxin</keyword>
<proteinExistence type="evidence at protein level"/>
<organism>
    <name type="scientific">Pelophylax ridibundus</name>
    <name type="common">Marsh frog</name>
    <name type="synonym">Rana ridibunda</name>
    <dbReference type="NCBI Taxonomy" id="8406"/>
    <lineage>
        <taxon>Eukaryota</taxon>
        <taxon>Metazoa</taxon>
        <taxon>Chordata</taxon>
        <taxon>Craniata</taxon>
        <taxon>Vertebrata</taxon>
        <taxon>Euteleostomi</taxon>
        <taxon>Amphibia</taxon>
        <taxon>Batrachia</taxon>
        <taxon>Anura</taxon>
        <taxon>Neobatrachia</taxon>
        <taxon>Ranoidea</taxon>
        <taxon>Ranidae</taxon>
        <taxon>Pelophylax</taxon>
    </lineage>
</organism>